<gene>
    <name type="primary">rps4</name>
</gene>
<dbReference type="EMBL" id="AY178864">
    <property type="protein sequence ID" value="AAP29394.2"/>
    <property type="molecule type" value="Genomic_DNA"/>
</dbReference>
<dbReference type="RefSeq" id="NP_848062.2">
    <property type="nucleotide sequence ID" value="NC_004766.1"/>
</dbReference>
<dbReference type="SMR" id="Q85FL8"/>
<dbReference type="GeneID" id="807441"/>
<dbReference type="GO" id="GO:0009507">
    <property type="term" value="C:chloroplast"/>
    <property type="evidence" value="ECO:0007669"/>
    <property type="project" value="UniProtKB-SubCell"/>
</dbReference>
<dbReference type="GO" id="GO:0015935">
    <property type="term" value="C:small ribosomal subunit"/>
    <property type="evidence" value="ECO:0007669"/>
    <property type="project" value="InterPro"/>
</dbReference>
<dbReference type="GO" id="GO:0019843">
    <property type="term" value="F:rRNA binding"/>
    <property type="evidence" value="ECO:0007669"/>
    <property type="project" value="UniProtKB-UniRule"/>
</dbReference>
<dbReference type="GO" id="GO:0003735">
    <property type="term" value="F:structural constituent of ribosome"/>
    <property type="evidence" value="ECO:0007669"/>
    <property type="project" value="InterPro"/>
</dbReference>
<dbReference type="GO" id="GO:0042274">
    <property type="term" value="P:ribosomal small subunit biogenesis"/>
    <property type="evidence" value="ECO:0007669"/>
    <property type="project" value="TreeGrafter"/>
</dbReference>
<dbReference type="GO" id="GO:0006412">
    <property type="term" value="P:translation"/>
    <property type="evidence" value="ECO:0007669"/>
    <property type="project" value="UniProtKB-UniRule"/>
</dbReference>
<dbReference type="CDD" id="cd00165">
    <property type="entry name" value="S4"/>
    <property type="match status" value="1"/>
</dbReference>
<dbReference type="FunFam" id="3.10.290.10:FF:000001">
    <property type="entry name" value="30S ribosomal protein S4"/>
    <property type="match status" value="1"/>
</dbReference>
<dbReference type="Gene3D" id="1.10.1050.10">
    <property type="entry name" value="Ribosomal Protein S4 Delta 41, Chain A, domain 1"/>
    <property type="match status" value="1"/>
</dbReference>
<dbReference type="Gene3D" id="3.10.290.10">
    <property type="entry name" value="RNA-binding S4 domain"/>
    <property type="match status" value="1"/>
</dbReference>
<dbReference type="HAMAP" id="MF_01306_B">
    <property type="entry name" value="Ribosomal_uS4_B"/>
    <property type="match status" value="1"/>
</dbReference>
<dbReference type="InterPro" id="IPR022801">
    <property type="entry name" value="Ribosomal_uS4"/>
</dbReference>
<dbReference type="InterPro" id="IPR005709">
    <property type="entry name" value="Ribosomal_uS4_bac-type"/>
</dbReference>
<dbReference type="InterPro" id="IPR001912">
    <property type="entry name" value="Ribosomal_uS4_N"/>
</dbReference>
<dbReference type="InterPro" id="IPR002942">
    <property type="entry name" value="S4_RNA-bd"/>
</dbReference>
<dbReference type="InterPro" id="IPR036986">
    <property type="entry name" value="S4_RNA-bd_sf"/>
</dbReference>
<dbReference type="NCBIfam" id="NF003717">
    <property type="entry name" value="PRK05327.1"/>
    <property type="match status" value="1"/>
</dbReference>
<dbReference type="NCBIfam" id="TIGR01017">
    <property type="entry name" value="rpsD_bact"/>
    <property type="match status" value="1"/>
</dbReference>
<dbReference type="PANTHER" id="PTHR11831">
    <property type="entry name" value="30S 40S RIBOSOMAL PROTEIN"/>
    <property type="match status" value="1"/>
</dbReference>
<dbReference type="PANTHER" id="PTHR11831:SF4">
    <property type="entry name" value="SMALL RIBOSOMAL SUBUNIT PROTEIN US4M"/>
    <property type="match status" value="1"/>
</dbReference>
<dbReference type="Pfam" id="PF00163">
    <property type="entry name" value="Ribosomal_S4"/>
    <property type="match status" value="1"/>
</dbReference>
<dbReference type="Pfam" id="PF01479">
    <property type="entry name" value="S4"/>
    <property type="match status" value="1"/>
</dbReference>
<dbReference type="SMART" id="SM01390">
    <property type="entry name" value="Ribosomal_S4"/>
    <property type="match status" value="1"/>
</dbReference>
<dbReference type="SMART" id="SM00363">
    <property type="entry name" value="S4"/>
    <property type="match status" value="1"/>
</dbReference>
<dbReference type="SUPFAM" id="SSF55174">
    <property type="entry name" value="Alpha-L RNA-binding motif"/>
    <property type="match status" value="1"/>
</dbReference>
<dbReference type="PROSITE" id="PS50889">
    <property type="entry name" value="S4"/>
    <property type="match status" value="1"/>
</dbReference>
<geneLocation type="chloroplast"/>
<reference key="1">
    <citation type="journal article" date="2003" name="DNA Res.">
        <title>Complete nucleotide sequence of the chloroplast genome from a leptosporangiate fern, Adiantum capillus-veneris L.</title>
        <authorList>
            <person name="Wolf P.G."/>
            <person name="Rowe C.A."/>
            <person name="Sinclair R.B."/>
            <person name="Hasebe M."/>
        </authorList>
    </citation>
    <scope>NUCLEOTIDE SEQUENCE [LARGE SCALE GENOMIC DNA]</scope>
</reference>
<reference key="2">
    <citation type="journal article" date="2004" name="Gene">
        <title>High levels of RNA editing in a vascular plant chloroplast genome: analysis of transcripts from the fern Adiantum capillus-veneris.</title>
        <authorList>
            <person name="Wolf P.G."/>
            <person name="Rowe C.A."/>
            <person name="Hasebe M."/>
        </authorList>
    </citation>
    <scope>NUCLEOTIDE SEQUENCE [GENOMIC DNA]</scope>
    <scope>RNA EDITING</scope>
    <source>
        <tissue>Frond</tissue>
    </source>
</reference>
<keyword id="KW-0150">Chloroplast</keyword>
<keyword id="KW-0934">Plastid</keyword>
<keyword id="KW-0687">Ribonucleoprotein</keyword>
<keyword id="KW-0689">Ribosomal protein</keyword>
<keyword id="KW-0691">RNA editing</keyword>
<keyword id="KW-0694">RNA-binding</keyword>
<keyword id="KW-0699">rRNA-binding</keyword>
<protein>
    <recommendedName>
        <fullName evidence="3">Small ribosomal subunit protein uS4c</fullName>
    </recommendedName>
    <alternativeName>
        <fullName>30S ribosomal protein S4, chloroplastic</fullName>
    </alternativeName>
</protein>
<proteinExistence type="evidence at transcript level"/>
<evidence type="ECO:0000250" key="1"/>
<evidence type="ECO:0000269" key="2">
    <source>
    </source>
</evidence>
<evidence type="ECO:0000305" key="3"/>
<evidence type="ECO:0000305" key="4">
    <source>
    </source>
</evidence>
<name>RR4_ADICA</name>
<organism>
    <name type="scientific">Adiantum capillus-veneris</name>
    <name type="common">Maidenhair fern</name>
    <dbReference type="NCBI Taxonomy" id="13818"/>
    <lineage>
        <taxon>Eukaryota</taxon>
        <taxon>Viridiplantae</taxon>
        <taxon>Streptophyta</taxon>
        <taxon>Embryophyta</taxon>
        <taxon>Tracheophyta</taxon>
        <taxon>Polypodiopsida</taxon>
        <taxon>Polypodiidae</taxon>
        <taxon>Polypodiales</taxon>
        <taxon>Pteridineae</taxon>
        <taxon>Pteridaceae</taxon>
        <taxon>Vittarioideae</taxon>
        <taxon>Adiantum</taxon>
    </lineage>
</organism>
<feature type="chain" id="PRO_0000132526" description="Small ribosomal subunit protein uS4c">
    <location>
        <begin position="1"/>
        <end position="197"/>
    </location>
</feature>
<feature type="domain" description="S4 RNA-binding">
    <location>
        <begin position="84"/>
        <end position="143"/>
    </location>
</feature>
<comment type="function">
    <text evidence="1">One of the primary rRNA binding proteins, it binds directly to 16S rRNA where it nucleates assembly of the body of the 30S subunit.</text>
</comment>
<comment type="function">
    <text evidence="1">With S5 and S12 plays an important role in translational accuracy.</text>
</comment>
<comment type="subunit">
    <text evidence="1">Part of the 30S ribosomal subunit. Contacts protein S5. The interaction surface between S4 and S5 is involved in control of translational fidelity (By similarity).</text>
</comment>
<comment type="subcellular location">
    <subcellularLocation>
        <location>Plastid</location>
        <location>Chloroplast</location>
    </subcellularLocation>
</comment>
<comment type="RNA editing">
    <location>
        <position position="78" evidence="2"/>
    </location>
    <location>
        <position position="143" evidence="2"/>
    </location>
</comment>
<comment type="miscellaneous">
    <text evidence="4">A slightly longer form of the protein may be created by RNA editing; however this region of the cDNA has not yet been sequenced.</text>
</comment>
<comment type="similarity">
    <text evidence="3">Belongs to the universal ribosomal protein uS4 family.</text>
</comment>
<sequence>MRRLKNLPGLTGTGKSNTSNLGEFRLAVDQSTSRKISQFCVRLEAKQRLRLNYGLTERQLLRYVRIARRTRGSTGQVLLQLLEMRLDNIIFQLGMASTIPAARQLVCHRHILVNHRVVDIPSYRCKPRDIISIRNRPTSANALKSESLSGNEVPDHLTLSISKTGEPTGLVNHLVNRESVNLDINELLVVEYYSRKA</sequence>
<accession>Q85FL8</accession>